<evidence type="ECO:0000250" key="1">
    <source>
        <dbReference type="UniProtKB" id="P62269"/>
    </source>
</evidence>
<evidence type="ECO:0000305" key="2"/>
<organism>
    <name type="scientific">Ictalurus punctatus</name>
    <name type="common">Channel catfish</name>
    <name type="synonym">Silurus punctatus</name>
    <dbReference type="NCBI Taxonomy" id="7998"/>
    <lineage>
        <taxon>Eukaryota</taxon>
        <taxon>Metazoa</taxon>
        <taxon>Chordata</taxon>
        <taxon>Craniata</taxon>
        <taxon>Vertebrata</taxon>
        <taxon>Euteleostomi</taxon>
        <taxon>Actinopterygii</taxon>
        <taxon>Neopterygii</taxon>
        <taxon>Teleostei</taxon>
        <taxon>Ostariophysi</taxon>
        <taxon>Siluriformes</taxon>
        <taxon>Ictaluridae</taxon>
        <taxon>Ictalurus</taxon>
    </lineage>
</organism>
<accession>Q90YQ5</accession>
<protein>
    <recommendedName>
        <fullName evidence="2">Small ribosomal subunit protein uS13</fullName>
    </recommendedName>
    <alternativeName>
        <fullName>40S ribosomal protein S18</fullName>
    </alternativeName>
</protein>
<name>RS18_ICTPU</name>
<gene>
    <name type="primary">rps18</name>
</gene>
<feature type="chain" id="PRO_0000132217" description="Small ribosomal subunit protein uS13">
    <location>
        <begin position="1"/>
        <end position="152"/>
    </location>
</feature>
<dbReference type="EMBL" id="AF402827">
    <property type="protein sequence ID" value="AAK95201.1"/>
    <property type="molecule type" value="mRNA"/>
</dbReference>
<dbReference type="RefSeq" id="NP_001187081.1">
    <property type="nucleotide sequence ID" value="NM_001200152.1"/>
</dbReference>
<dbReference type="SMR" id="Q90YQ5"/>
<dbReference type="STRING" id="7998.ENSIPUP00000006667"/>
<dbReference type="GeneID" id="100304570"/>
<dbReference type="KEGG" id="ipu:100304570"/>
<dbReference type="CTD" id="6222"/>
<dbReference type="OMA" id="SYKGVRH"/>
<dbReference type="OrthoDB" id="1702480at2759"/>
<dbReference type="Proteomes" id="UP000221080">
    <property type="component" value="Chromosome 14"/>
</dbReference>
<dbReference type="GO" id="GO:0022627">
    <property type="term" value="C:cytosolic small ribosomal subunit"/>
    <property type="evidence" value="ECO:0000250"/>
    <property type="project" value="AgBase"/>
</dbReference>
<dbReference type="GO" id="GO:0015935">
    <property type="term" value="C:small ribosomal subunit"/>
    <property type="evidence" value="ECO:0000250"/>
    <property type="project" value="AgBase"/>
</dbReference>
<dbReference type="GO" id="GO:0019843">
    <property type="term" value="F:rRNA binding"/>
    <property type="evidence" value="ECO:0007669"/>
    <property type="project" value="UniProtKB-KW"/>
</dbReference>
<dbReference type="GO" id="GO:0003735">
    <property type="term" value="F:structural constituent of ribosome"/>
    <property type="evidence" value="ECO:0007669"/>
    <property type="project" value="InterPro"/>
</dbReference>
<dbReference type="GO" id="GO:0006412">
    <property type="term" value="P:translation"/>
    <property type="evidence" value="ECO:0007669"/>
    <property type="project" value="InterPro"/>
</dbReference>
<dbReference type="FunFam" id="1.10.8.50:FF:000002">
    <property type="entry name" value="40S ribosomal protein S18"/>
    <property type="match status" value="1"/>
</dbReference>
<dbReference type="FunFam" id="4.10.910.10:FF:000002">
    <property type="entry name" value="40S ribosomal protein S18"/>
    <property type="match status" value="1"/>
</dbReference>
<dbReference type="Gene3D" id="1.10.8.50">
    <property type="match status" value="1"/>
</dbReference>
<dbReference type="Gene3D" id="4.10.910.10">
    <property type="entry name" value="30s ribosomal protein s13, domain 2"/>
    <property type="match status" value="1"/>
</dbReference>
<dbReference type="HAMAP" id="MF_01315">
    <property type="entry name" value="Ribosomal_uS13"/>
    <property type="match status" value="1"/>
</dbReference>
<dbReference type="InterPro" id="IPR027437">
    <property type="entry name" value="Rbsml_uS13_C"/>
</dbReference>
<dbReference type="InterPro" id="IPR001892">
    <property type="entry name" value="Ribosomal_uS13"/>
</dbReference>
<dbReference type="InterPro" id="IPR010979">
    <property type="entry name" value="Ribosomal_uS13-like_H2TH"/>
</dbReference>
<dbReference type="InterPro" id="IPR018269">
    <property type="entry name" value="Ribosomal_uS13_CS"/>
</dbReference>
<dbReference type="NCBIfam" id="NF003140">
    <property type="entry name" value="PRK04053.1"/>
    <property type="match status" value="1"/>
</dbReference>
<dbReference type="PANTHER" id="PTHR10871">
    <property type="entry name" value="30S RIBOSOMAL PROTEIN S13/40S RIBOSOMAL PROTEIN S18"/>
    <property type="match status" value="1"/>
</dbReference>
<dbReference type="PANTHER" id="PTHR10871:SF3">
    <property type="entry name" value="SMALL RIBOSOMAL SUBUNIT PROTEIN US13"/>
    <property type="match status" value="1"/>
</dbReference>
<dbReference type="Pfam" id="PF00416">
    <property type="entry name" value="Ribosomal_S13"/>
    <property type="match status" value="1"/>
</dbReference>
<dbReference type="PIRSF" id="PIRSF002134">
    <property type="entry name" value="Ribosomal_S13"/>
    <property type="match status" value="1"/>
</dbReference>
<dbReference type="SUPFAM" id="SSF46946">
    <property type="entry name" value="S13-like H2TH domain"/>
    <property type="match status" value="1"/>
</dbReference>
<dbReference type="PROSITE" id="PS00646">
    <property type="entry name" value="RIBOSOMAL_S13_1"/>
    <property type="match status" value="1"/>
</dbReference>
<dbReference type="PROSITE" id="PS50159">
    <property type="entry name" value="RIBOSOMAL_S13_2"/>
    <property type="match status" value="1"/>
</dbReference>
<keyword id="KW-0963">Cytoplasm</keyword>
<keyword id="KW-0687">Ribonucleoprotein</keyword>
<keyword id="KW-0689">Ribosomal protein</keyword>
<keyword id="KW-0694">RNA-binding</keyword>
<keyword id="KW-0699">rRNA-binding</keyword>
<proteinExistence type="evidence at transcript level"/>
<reference key="1">
    <citation type="journal article" date="2002" name="Gene">
        <title>Translational machinery of channel catfish: I. A transcriptomic approach to the analysis of 32 40S ribosomal protein genes and their expression.</title>
        <authorList>
            <person name="Karsi A."/>
            <person name="Patterson A."/>
            <person name="Feng J."/>
            <person name="Liu Z.-J."/>
        </authorList>
    </citation>
    <scope>NUCLEOTIDE SEQUENCE [MRNA]</scope>
</reference>
<sequence length="152" mass="17691">MSLVIPEKFQHILRVLNTNIDGRRKIAFAITAIKGVGRRYAHVVLRKADIDLSKRAGELTEDEVERVVTIMQNPRQYKIPDWFLNRQKDVKDGKYSQVLANGLDNKLREDLERLKKIRAHRGLRHFWGLRVRGQHTKTTGRRGRTVGVSKKK</sequence>
<comment type="function">
    <text evidence="1">Component of the small ribosomal subunit. The ribosome is a large ribonucleoprotein complex responsible for the synthesis of proteins in the cell.</text>
</comment>
<comment type="subunit">
    <text evidence="1">Component of the small ribosomal subunit.</text>
</comment>
<comment type="subcellular location">
    <subcellularLocation>
        <location evidence="1">Cytoplasm</location>
    </subcellularLocation>
</comment>
<comment type="similarity">
    <text evidence="2">Belongs to the universal ribosomal protein uS13 family.</text>
</comment>